<protein>
    <recommendedName>
        <fullName evidence="1">Phosphate acyltransferase</fullName>
        <ecNumber evidence="1">2.3.1.274</ecNumber>
    </recommendedName>
    <alternativeName>
        <fullName evidence="1">Acyl-ACP phosphotransacylase</fullName>
    </alternativeName>
    <alternativeName>
        <fullName evidence="1">Acyl-[acyl-carrier-protein]--phosphate acyltransferase</fullName>
    </alternativeName>
    <alternativeName>
        <fullName evidence="1">Phosphate-acyl-ACP acyltransferase</fullName>
    </alternativeName>
</protein>
<name>PLSX_BORPA</name>
<gene>
    <name evidence="1" type="primary">plsX</name>
    <name type="ordered locus">BPP3308</name>
</gene>
<reference key="1">
    <citation type="journal article" date="2003" name="Nat. Genet.">
        <title>Comparative analysis of the genome sequences of Bordetella pertussis, Bordetella parapertussis and Bordetella bronchiseptica.</title>
        <authorList>
            <person name="Parkhill J."/>
            <person name="Sebaihia M."/>
            <person name="Preston A."/>
            <person name="Murphy L.D."/>
            <person name="Thomson N.R."/>
            <person name="Harris D.E."/>
            <person name="Holden M.T.G."/>
            <person name="Churcher C.M."/>
            <person name="Bentley S.D."/>
            <person name="Mungall K.L."/>
            <person name="Cerdeno-Tarraga A.-M."/>
            <person name="Temple L."/>
            <person name="James K.D."/>
            <person name="Harris B."/>
            <person name="Quail M.A."/>
            <person name="Achtman M."/>
            <person name="Atkin R."/>
            <person name="Baker S."/>
            <person name="Basham D."/>
            <person name="Bason N."/>
            <person name="Cherevach I."/>
            <person name="Chillingworth T."/>
            <person name="Collins M."/>
            <person name="Cronin A."/>
            <person name="Davis P."/>
            <person name="Doggett J."/>
            <person name="Feltwell T."/>
            <person name="Goble A."/>
            <person name="Hamlin N."/>
            <person name="Hauser H."/>
            <person name="Holroyd S."/>
            <person name="Jagels K."/>
            <person name="Leather S."/>
            <person name="Moule S."/>
            <person name="Norberczak H."/>
            <person name="O'Neil S."/>
            <person name="Ormond D."/>
            <person name="Price C."/>
            <person name="Rabbinowitsch E."/>
            <person name="Rutter S."/>
            <person name="Sanders M."/>
            <person name="Saunders D."/>
            <person name="Seeger K."/>
            <person name="Sharp S."/>
            <person name="Simmonds M."/>
            <person name="Skelton J."/>
            <person name="Squares R."/>
            <person name="Squares S."/>
            <person name="Stevens K."/>
            <person name="Unwin L."/>
            <person name="Whitehead S."/>
            <person name="Barrell B.G."/>
            <person name="Maskell D.J."/>
        </authorList>
    </citation>
    <scope>NUCLEOTIDE SEQUENCE [LARGE SCALE GENOMIC DNA]</scope>
    <source>
        <strain>12822 / ATCC BAA-587 / NCTC 13253</strain>
    </source>
</reference>
<organism>
    <name type="scientific">Bordetella parapertussis (strain 12822 / ATCC BAA-587 / NCTC 13253)</name>
    <dbReference type="NCBI Taxonomy" id="257311"/>
    <lineage>
        <taxon>Bacteria</taxon>
        <taxon>Pseudomonadati</taxon>
        <taxon>Pseudomonadota</taxon>
        <taxon>Betaproteobacteria</taxon>
        <taxon>Burkholderiales</taxon>
        <taxon>Alcaligenaceae</taxon>
        <taxon>Bordetella</taxon>
    </lineage>
</organism>
<comment type="function">
    <text evidence="1">Catalyzes the reversible formation of acyl-phosphate (acyl-PO(4)) from acyl-[acyl-carrier-protein] (acyl-ACP). This enzyme utilizes acyl-ACP as fatty acyl donor, but not acyl-CoA.</text>
</comment>
<comment type="catalytic activity">
    <reaction evidence="1">
        <text>a fatty acyl-[ACP] + phosphate = an acyl phosphate + holo-[ACP]</text>
        <dbReference type="Rhea" id="RHEA:42292"/>
        <dbReference type="Rhea" id="RHEA-COMP:9685"/>
        <dbReference type="Rhea" id="RHEA-COMP:14125"/>
        <dbReference type="ChEBI" id="CHEBI:43474"/>
        <dbReference type="ChEBI" id="CHEBI:59918"/>
        <dbReference type="ChEBI" id="CHEBI:64479"/>
        <dbReference type="ChEBI" id="CHEBI:138651"/>
        <dbReference type="EC" id="2.3.1.274"/>
    </reaction>
</comment>
<comment type="pathway">
    <text evidence="1">Lipid metabolism; phospholipid metabolism.</text>
</comment>
<comment type="subunit">
    <text evidence="1">Homodimer. Probably interacts with PlsY.</text>
</comment>
<comment type="subcellular location">
    <subcellularLocation>
        <location evidence="1">Cytoplasm</location>
    </subcellularLocation>
    <text evidence="1">Associated with the membrane possibly through PlsY.</text>
</comment>
<comment type="similarity">
    <text evidence="1">Belongs to the PlsX family.</text>
</comment>
<keyword id="KW-0963">Cytoplasm</keyword>
<keyword id="KW-0444">Lipid biosynthesis</keyword>
<keyword id="KW-0443">Lipid metabolism</keyword>
<keyword id="KW-0594">Phospholipid biosynthesis</keyword>
<keyword id="KW-1208">Phospholipid metabolism</keyword>
<keyword id="KW-0808">Transferase</keyword>
<dbReference type="EC" id="2.3.1.274" evidence="1"/>
<dbReference type="EMBL" id="BX640433">
    <property type="protein sequence ID" value="CAE38593.1"/>
    <property type="molecule type" value="Genomic_DNA"/>
</dbReference>
<dbReference type="RefSeq" id="WP_003813826.1">
    <property type="nucleotide sequence ID" value="NC_002928.3"/>
</dbReference>
<dbReference type="SMR" id="Q7W5I3"/>
<dbReference type="GeneID" id="93205090"/>
<dbReference type="KEGG" id="bpa:BPP3308"/>
<dbReference type="HOGENOM" id="CLU_039379_1_0_4"/>
<dbReference type="UniPathway" id="UPA00085"/>
<dbReference type="Proteomes" id="UP000001421">
    <property type="component" value="Chromosome"/>
</dbReference>
<dbReference type="GO" id="GO:0005737">
    <property type="term" value="C:cytoplasm"/>
    <property type="evidence" value="ECO:0007669"/>
    <property type="project" value="UniProtKB-SubCell"/>
</dbReference>
<dbReference type="GO" id="GO:0043811">
    <property type="term" value="F:phosphate:acyl-[acyl carrier protein] acyltransferase activity"/>
    <property type="evidence" value="ECO:0007669"/>
    <property type="project" value="UniProtKB-UniRule"/>
</dbReference>
<dbReference type="GO" id="GO:0006633">
    <property type="term" value="P:fatty acid biosynthetic process"/>
    <property type="evidence" value="ECO:0007669"/>
    <property type="project" value="UniProtKB-UniRule"/>
</dbReference>
<dbReference type="GO" id="GO:0008654">
    <property type="term" value="P:phospholipid biosynthetic process"/>
    <property type="evidence" value="ECO:0007669"/>
    <property type="project" value="UniProtKB-KW"/>
</dbReference>
<dbReference type="Gene3D" id="3.40.718.10">
    <property type="entry name" value="Isopropylmalate Dehydrogenase"/>
    <property type="match status" value="1"/>
</dbReference>
<dbReference type="HAMAP" id="MF_00019">
    <property type="entry name" value="PlsX"/>
    <property type="match status" value="1"/>
</dbReference>
<dbReference type="InterPro" id="IPR003664">
    <property type="entry name" value="FA_synthesis"/>
</dbReference>
<dbReference type="InterPro" id="IPR012281">
    <property type="entry name" value="Phospholipid_synth_PlsX-like"/>
</dbReference>
<dbReference type="NCBIfam" id="TIGR00182">
    <property type="entry name" value="plsX"/>
    <property type="match status" value="1"/>
</dbReference>
<dbReference type="PANTHER" id="PTHR30100">
    <property type="entry name" value="FATTY ACID/PHOSPHOLIPID SYNTHESIS PROTEIN PLSX"/>
    <property type="match status" value="1"/>
</dbReference>
<dbReference type="PANTHER" id="PTHR30100:SF1">
    <property type="entry name" value="PHOSPHATE ACYLTRANSFERASE"/>
    <property type="match status" value="1"/>
</dbReference>
<dbReference type="Pfam" id="PF02504">
    <property type="entry name" value="FA_synthesis"/>
    <property type="match status" value="1"/>
</dbReference>
<dbReference type="PIRSF" id="PIRSF002465">
    <property type="entry name" value="Phsphlp_syn_PlsX"/>
    <property type="match status" value="1"/>
</dbReference>
<dbReference type="SUPFAM" id="SSF53659">
    <property type="entry name" value="Isocitrate/Isopropylmalate dehydrogenase-like"/>
    <property type="match status" value="1"/>
</dbReference>
<accession>Q7W5I3</accession>
<feature type="chain" id="PRO_0000189851" description="Phosphate acyltransferase">
    <location>
        <begin position="1"/>
        <end position="352"/>
    </location>
</feature>
<sequence length="352" mass="37574">MIRIAIDCMGGDFGLPVTIPAAIEFARQFPDTRLLLVGLPDAIEAALAERRDAPRDRLDIVPATEVVSMDDPVEVALRRKKDSSMRLAAQAVKDGRADACISAGNTGAWMAISRYVLKTLDGIDRPAIATSIPNQTGRATTVLDLGANVDCSAEHLLQFAIMGAALSQAVDHRDRPTVGLLNIGEEIIKGNEVVKEAAELLRASPLNFYGNVEGNDIFKGTVDVVVCDGFVGNVVLKSVEGLAKMLSSVIREEFKRNFITLLAGAFAKPVLNRLRNRVDNRRYNGAALLGLRGVVIKSHGSADAYAFGFALQRAREAVASKLLERTAQTVAQITQRVQSGEAVAPGAAGDTA</sequence>
<proteinExistence type="inferred from homology"/>
<evidence type="ECO:0000255" key="1">
    <source>
        <dbReference type="HAMAP-Rule" id="MF_00019"/>
    </source>
</evidence>